<keyword id="KW-1003">Cell membrane</keyword>
<keyword id="KW-0406">Ion transport</keyword>
<keyword id="KW-0472">Membrane</keyword>
<keyword id="KW-1185">Reference proteome</keyword>
<keyword id="KW-0769">Symport</keyword>
<keyword id="KW-0812">Transmembrane</keyword>
<keyword id="KW-1133">Transmembrane helix</keyword>
<keyword id="KW-0813">Transport</keyword>
<reference key="1">
    <citation type="journal article" date="2006" name="Proc. Natl. Acad. Sci. U.S.A.">
        <title>Comparative genomics of the lactic acid bacteria.</title>
        <authorList>
            <person name="Makarova K.S."/>
            <person name="Slesarev A."/>
            <person name="Wolf Y.I."/>
            <person name="Sorokin A."/>
            <person name="Mirkin B."/>
            <person name="Koonin E.V."/>
            <person name="Pavlov A."/>
            <person name="Pavlova N."/>
            <person name="Karamychev V."/>
            <person name="Polouchine N."/>
            <person name="Shakhova V."/>
            <person name="Grigoriev I."/>
            <person name="Lou Y."/>
            <person name="Rohksar D."/>
            <person name="Lucas S."/>
            <person name="Huang K."/>
            <person name="Goodstein D.M."/>
            <person name="Hawkins T."/>
            <person name="Plengvidhya V."/>
            <person name="Welker D."/>
            <person name="Hughes J."/>
            <person name="Goh Y."/>
            <person name="Benson A."/>
            <person name="Baldwin K."/>
            <person name="Lee J.-H."/>
            <person name="Diaz-Muniz I."/>
            <person name="Dosti B."/>
            <person name="Smeianov V."/>
            <person name="Wechter W."/>
            <person name="Barabote R."/>
            <person name="Lorca G."/>
            <person name="Altermann E."/>
            <person name="Barrangou R."/>
            <person name="Ganesan B."/>
            <person name="Xie Y."/>
            <person name="Rawsthorne H."/>
            <person name="Tamir D."/>
            <person name="Parker C."/>
            <person name="Breidt F."/>
            <person name="Broadbent J.R."/>
            <person name="Hutkins R."/>
            <person name="O'Sullivan D."/>
            <person name="Steele J."/>
            <person name="Unlu G."/>
            <person name="Saier M.H. Jr."/>
            <person name="Klaenhammer T."/>
            <person name="Richardson P."/>
            <person name="Kozyavkin S."/>
            <person name="Weimer B.C."/>
            <person name="Mills D.A."/>
        </authorList>
    </citation>
    <scope>NUCLEOTIDE SEQUENCE [LARGE SCALE GENOMIC DNA]</scope>
    <source>
        <strain>ATCC 334 / BCRC 17002 / CCUG 31169 / CIP 107868 / KCTC 3260 / NRRL B-441</strain>
    </source>
</reference>
<evidence type="ECO:0000255" key="1">
    <source>
        <dbReference type="HAMAP-Rule" id="MF_00221"/>
    </source>
</evidence>
<organism>
    <name type="scientific">Lacticaseibacillus paracasei (strain ATCC 334 / BCRC 17002 / CCUG 31169 / CIP 107868 / KCTC 3260 / NRRL B-441)</name>
    <name type="common">Lactobacillus paracasei</name>
    <dbReference type="NCBI Taxonomy" id="321967"/>
    <lineage>
        <taxon>Bacteria</taxon>
        <taxon>Bacillati</taxon>
        <taxon>Bacillota</taxon>
        <taxon>Bacilli</taxon>
        <taxon>Lactobacillales</taxon>
        <taxon>Lactobacillaceae</taxon>
        <taxon>Lacticaseibacillus</taxon>
    </lineage>
</organism>
<accession>Q03D26</accession>
<gene>
    <name evidence="1" type="primary">mntH</name>
    <name type="ordered locus">LSEI_0030</name>
</gene>
<feature type="chain" id="PRO_0000325606" description="Divalent metal cation transporter MntH">
    <location>
        <begin position="1"/>
        <end position="458"/>
    </location>
</feature>
<feature type="transmembrane region" description="Helical" evidence="1">
    <location>
        <begin position="38"/>
        <end position="58"/>
    </location>
</feature>
<feature type="transmembrane region" description="Helical" evidence="1">
    <location>
        <begin position="76"/>
        <end position="96"/>
    </location>
</feature>
<feature type="transmembrane region" description="Helical" evidence="1">
    <location>
        <begin position="119"/>
        <end position="139"/>
    </location>
</feature>
<feature type="transmembrane region" description="Helical" evidence="1">
    <location>
        <begin position="151"/>
        <end position="171"/>
    </location>
</feature>
<feature type="transmembrane region" description="Helical" evidence="1">
    <location>
        <begin position="180"/>
        <end position="200"/>
    </location>
</feature>
<feature type="transmembrane region" description="Helical" evidence="1">
    <location>
        <begin position="223"/>
        <end position="243"/>
    </location>
</feature>
<feature type="transmembrane region" description="Helical" evidence="1">
    <location>
        <begin position="275"/>
        <end position="295"/>
    </location>
</feature>
<feature type="transmembrane region" description="Helical" evidence="1">
    <location>
        <begin position="315"/>
        <end position="335"/>
    </location>
</feature>
<feature type="transmembrane region" description="Helical" evidence="1">
    <location>
        <begin position="370"/>
        <end position="390"/>
    </location>
</feature>
<feature type="transmembrane region" description="Helical" evidence="1">
    <location>
        <begin position="393"/>
        <end position="413"/>
    </location>
</feature>
<feature type="transmembrane region" description="Helical" evidence="1">
    <location>
        <begin position="437"/>
        <end position="457"/>
    </location>
</feature>
<dbReference type="EMBL" id="CP000423">
    <property type="protein sequence ID" value="ABJ68896.1"/>
    <property type="molecule type" value="Genomic_DNA"/>
</dbReference>
<dbReference type="RefSeq" id="WP_011673942.1">
    <property type="nucleotide sequence ID" value="NC_008526.1"/>
</dbReference>
<dbReference type="RefSeq" id="YP_805338.1">
    <property type="nucleotide sequence ID" value="NC_008526.1"/>
</dbReference>
<dbReference type="SMR" id="Q03D26"/>
<dbReference type="STRING" id="321967.LSEI_0030"/>
<dbReference type="PaxDb" id="321967-LSEI_0030"/>
<dbReference type="KEGG" id="lca:LSEI_0030"/>
<dbReference type="PATRIC" id="fig|321967.11.peg.63"/>
<dbReference type="HOGENOM" id="CLU_020088_2_0_9"/>
<dbReference type="Proteomes" id="UP000001651">
    <property type="component" value="Chromosome"/>
</dbReference>
<dbReference type="GO" id="GO:0005886">
    <property type="term" value="C:plasma membrane"/>
    <property type="evidence" value="ECO:0007669"/>
    <property type="project" value="UniProtKB-SubCell"/>
</dbReference>
<dbReference type="GO" id="GO:0015086">
    <property type="term" value="F:cadmium ion transmembrane transporter activity"/>
    <property type="evidence" value="ECO:0007669"/>
    <property type="project" value="TreeGrafter"/>
</dbReference>
<dbReference type="GO" id="GO:0005384">
    <property type="term" value="F:manganese ion transmembrane transporter activity"/>
    <property type="evidence" value="ECO:0007669"/>
    <property type="project" value="TreeGrafter"/>
</dbReference>
<dbReference type="GO" id="GO:0046872">
    <property type="term" value="F:metal ion binding"/>
    <property type="evidence" value="ECO:0007669"/>
    <property type="project" value="UniProtKB-UniRule"/>
</dbReference>
<dbReference type="GO" id="GO:0015293">
    <property type="term" value="F:symporter activity"/>
    <property type="evidence" value="ECO:0007669"/>
    <property type="project" value="UniProtKB-UniRule"/>
</dbReference>
<dbReference type="GO" id="GO:0034755">
    <property type="term" value="P:iron ion transmembrane transport"/>
    <property type="evidence" value="ECO:0007669"/>
    <property type="project" value="TreeGrafter"/>
</dbReference>
<dbReference type="HAMAP" id="MF_00221">
    <property type="entry name" value="NRAMP"/>
    <property type="match status" value="1"/>
</dbReference>
<dbReference type="InterPro" id="IPR001046">
    <property type="entry name" value="NRAMP_fam"/>
</dbReference>
<dbReference type="NCBIfam" id="TIGR01197">
    <property type="entry name" value="nramp"/>
    <property type="match status" value="1"/>
</dbReference>
<dbReference type="NCBIfam" id="NF037982">
    <property type="entry name" value="Nramp_1"/>
    <property type="match status" value="1"/>
</dbReference>
<dbReference type="NCBIfam" id="NF001923">
    <property type="entry name" value="PRK00701.1"/>
    <property type="match status" value="1"/>
</dbReference>
<dbReference type="PANTHER" id="PTHR11706:SF33">
    <property type="entry name" value="NATURAL RESISTANCE-ASSOCIATED MACROPHAGE PROTEIN 2"/>
    <property type="match status" value="1"/>
</dbReference>
<dbReference type="PANTHER" id="PTHR11706">
    <property type="entry name" value="SOLUTE CARRIER PROTEIN FAMILY 11 MEMBER"/>
    <property type="match status" value="1"/>
</dbReference>
<dbReference type="Pfam" id="PF01566">
    <property type="entry name" value="Nramp"/>
    <property type="match status" value="1"/>
</dbReference>
<dbReference type="PRINTS" id="PR00447">
    <property type="entry name" value="NATRESASSCMP"/>
</dbReference>
<comment type="function">
    <text evidence="1">H(+)-stimulated, divalent metal cation uptake system.</text>
</comment>
<comment type="subcellular location">
    <subcellularLocation>
        <location evidence="1">Cell membrane</location>
        <topology evidence="1">Multi-pass membrane protein</topology>
    </subcellularLocation>
</comment>
<comment type="similarity">
    <text evidence="1">Belongs to the NRAMP family.</text>
</comment>
<name>MNTH_LACP3</name>
<protein>
    <recommendedName>
        <fullName evidence="1">Divalent metal cation transporter MntH</fullName>
    </recommendedName>
</protein>
<proteinExistence type="inferred from homology"/>
<sequence length="458" mass="49849">MASEDKKSKREHIIHFEDTASKSLDEVNGSVEVPHNAGFWKTLAAYTGPGILVAVGYMDPGNWITSIAGGASFKYSLLSVILISSLIAMLLQAMAARLGIVTGRDLAQMTRDHTSKAMGGFLWVITELAIMATDIAEIIGSAIALKLLFNMPLIVGIIITTADVLILLLLMRLGFRKIEAVVATLVLVILLVFAYEVILAQPNVPELLKGYLPHADIVTNKSMLYLSLGIVGATVMPHDLFLGSSISQTRKIDRTKHEEVKKAIKFSTIDSNLQLTMAFIVNSLLLILGAALFFGTSSSVGRFVDLFNALSNSQIVGAIASPMLSMLFAVALLASGQSSTITGTLAGQIIMEGFIHLKMPLWAQRLLTRLMSVTPVLIFAIYYHGNEAKIENLLTFSQVFLSIALPFAVIPLVLYTSDKKIMGEFANRAWVKWTAWFISGVLIILNLYLIAQTLGFVK</sequence>